<comment type="function">
    <text evidence="1">Catalyzes the condensation of pantoate with beta-alanine in an ATP-dependent reaction via a pantoyl-adenylate intermediate.</text>
</comment>
<comment type="catalytic activity">
    <reaction evidence="1">
        <text>(R)-pantoate + beta-alanine + ATP = (R)-pantothenate + AMP + diphosphate + H(+)</text>
        <dbReference type="Rhea" id="RHEA:10912"/>
        <dbReference type="ChEBI" id="CHEBI:15378"/>
        <dbReference type="ChEBI" id="CHEBI:15980"/>
        <dbReference type="ChEBI" id="CHEBI:29032"/>
        <dbReference type="ChEBI" id="CHEBI:30616"/>
        <dbReference type="ChEBI" id="CHEBI:33019"/>
        <dbReference type="ChEBI" id="CHEBI:57966"/>
        <dbReference type="ChEBI" id="CHEBI:456215"/>
        <dbReference type="EC" id="6.3.2.1"/>
    </reaction>
</comment>
<comment type="pathway">
    <text evidence="1">Cofactor biosynthesis; (R)-pantothenate biosynthesis; (R)-pantothenate from (R)-pantoate and beta-alanine: step 1/1.</text>
</comment>
<comment type="subunit">
    <text evidence="1">Homodimer.</text>
</comment>
<comment type="subcellular location">
    <subcellularLocation>
        <location evidence="1">Cytoplasm</location>
    </subcellularLocation>
</comment>
<comment type="miscellaneous">
    <text evidence="1">The reaction proceeds by a bi uni uni bi ping pong mechanism.</text>
</comment>
<comment type="similarity">
    <text evidence="1">Belongs to the pantothenate synthetase family.</text>
</comment>
<protein>
    <recommendedName>
        <fullName evidence="1">Pantothenate synthetase</fullName>
        <shortName evidence="1">PS</shortName>
        <ecNumber evidence="1">6.3.2.1</ecNumber>
    </recommendedName>
    <alternativeName>
        <fullName evidence="1">Pantoate--beta-alanine ligase</fullName>
    </alternativeName>
    <alternativeName>
        <fullName evidence="1">Pantoate-activating enzyme</fullName>
    </alternativeName>
</protein>
<organism>
    <name type="scientific">Bacillus cereus (strain ATCC 10987 / NRS 248)</name>
    <dbReference type="NCBI Taxonomy" id="222523"/>
    <lineage>
        <taxon>Bacteria</taxon>
        <taxon>Bacillati</taxon>
        <taxon>Bacillota</taxon>
        <taxon>Bacilli</taxon>
        <taxon>Bacillales</taxon>
        <taxon>Bacillaceae</taxon>
        <taxon>Bacillus</taxon>
        <taxon>Bacillus cereus group</taxon>
    </lineage>
</organism>
<evidence type="ECO:0000255" key="1">
    <source>
        <dbReference type="HAMAP-Rule" id="MF_00158"/>
    </source>
</evidence>
<gene>
    <name evidence="1" type="primary">panC</name>
    <name type="ordered locus">BCE_1669</name>
</gene>
<name>PANC_BACC1</name>
<feature type="chain" id="PRO_0000128199" description="Pantothenate synthetase">
    <location>
        <begin position="1"/>
        <end position="282"/>
    </location>
</feature>
<feature type="active site" description="Proton donor" evidence="1">
    <location>
        <position position="37"/>
    </location>
</feature>
<feature type="binding site" evidence="1">
    <location>
        <begin position="30"/>
        <end position="37"/>
    </location>
    <ligand>
        <name>ATP</name>
        <dbReference type="ChEBI" id="CHEBI:30616"/>
    </ligand>
</feature>
<feature type="binding site" evidence="1">
    <location>
        <position position="61"/>
    </location>
    <ligand>
        <name>(R)-pantoate</name>
        <dbReference type="ChEBI" id="CHEBI:15980"/>
    </ligand>
</feature>
<feature type="binding site" evidence="1">
    <location>
        <position position="61"/>
    </location>
    <ligand>
        <name>beta-alanine</name>
        <dbReference type="ChEBI" id="CHEBI:57966"/>
    </ligand>
</feature>
<feature type="binding site" evidence="1">
    <location>
        <begin position="147"/>
        <end position="150"/>
    </location>
    <ligand>
        <name>ATP</name>
        <dbReference type="ChEBI" id="CHEBI:30616"/>
    </ligand>
</feature>
<feature type="binding site" evidence="1">
    <location>
        <position position="153"/>
    </location>
    <ligand>
        <name>(R)-pantoate</name>
        <dbReference type="ChEBI" id="CHEBI:15980"/>
    </ligand>
</feature>
<feature type="binding site" evidence="1">
    <location>
        <position position="176"/>
    </location>
    <ligand>
        <name>ATP</name>
        <dbReference type="ChEBI" id="CHEBI:30616"/>
    </ligand>
</feature>
<feature type="binding site" evidence="1">
    <location>
        <begin position="184"/>
        <end position="187"/>
    </location>
    <ligand>
        <name>ATP</name>
        <dbReference type="ChEBI" id="CHEBI:30616"/>
    </ligand>
</feature>
<keyword id="KW-0067">ATP-binding</keyword>
<keyword id="KW-0963">Cytoplasm</keyword>
<keyword id="KW-0436">Ligase</keyword>
<keyword id="KW-0547">Nucleotide-binding</keyword>
<keyword id="KW-0566">Pantothenate biosynthesis</keyword>
<sequence>MKIITTVQEMQQITNELRASGKSIGFVPTMGYLHEGHATLLRKAREENEIVVLSVFVNPLQFGPNEDLDRYPRDIDRDENVAKENGVDYLFYPSVEEMYPAEQTTTVEVVKRTDVLCGKQRPGHFAGVATVLMKLFNITLPTRAYFGMKDAQQVAVIEGFVADFNIPVTIVPVDIVREEDGLAKSSRNVYLSQEEREEAPHLYRSLCIAKERIEAGERNAEIITTLVKEYIETYTKGTVDYADLYTYPSLQVVDKIEGRIILAIAVKFDNVRLIDNITLTVK</sequence>
<accession>Q73AV3</accession>
<dbReference type="EC" id="6.3.2.1" evidence="1"/>
<dbReference type="EMBL" id="AE017194">
    <property type="protein sequence ID" value="AAS40598.1"/>
    <property type="molecule type" value="Genomic_DNA"/>
</dbReference>
<dbReference type="SMR" id="Q73AV3"/>
<dbReference type="KEGG" id="bca:BCE_1669"/>
<dbReference type="HOGENOM" id="CLU_047148_0_0_9"/>
<dbReference type="UniPathway" id="UPA00028">
    <property type="reaction ID" value="UER00005"/>
</dbReference>
<dbReference type="Proteomes" id="UP000002527">
    <property type="component" value="Chromosome"/>
</dbReference>
<dbReference type="GO" id="GO:0005829">
    <property type="term" value="C:cytosol"/>
    <property type="evidence" value="ECO:0007669"/>
    <property type="project" value="TreeGrafter"/>
</dbReference>
<dbReference type="GO" id="GO:0005524">
    <property type="term" value="F:ATP binding"/>
    <property type="evidence" value="ECO:0007669"/>
    <property type="project" value="UniProtKB-KW"/>
</dbReference>
<dbReference type="GO" id="GO:0004592">
    <property type="term" value="F:pantoate-beta-alanine ligase activity"/>
    <property type="evidence" value="ECO:0007669"/>
    <property type="project" value="UniProtKB-UniRule"/>
</dbReference>
<dbReference type="GO" id="GO:0015940">
    <property type="term" value="P:pantothenate biosynthetic process"/>
    <property type="evidence" value="ECO:0007669"/>
    <property type="project" value="UniProtKB-UniRule"/>
</dbReference>
<dbReference type="CDD" id="cd00560">
    <property type="entry name" value="PanC"/>
    <property type="match status" value="1"/>
</dbReference>
<dbReference type="FunFam" id="3.30.1300.10:FF:000001">
    <property type="entry name" value="Pantothenate synthetase"/>
    <property type="match status" value="1"/>
</dbReference>
<dbReference type="FunFam" id="3.40.50.620:FF:000013">
    <property type="entry name" value="Pantothenate synthetase"/>
    <property type="match status" value="1"/>
</dbReference>
<dbReference type="Gene3D" id="3.40.50.620">
    <property type="entry name" value="HUPs"/>
    <property type="match status" value="1"/>
</dbReference>
<dbReference type="Gene3D" id="3.30.1300.10">
    <property type="entry name" value="Pantoate-beta-alanine ligase, C-terminal domain"/>
    <property type="match status" value="1"/>
</dbReference>
<dbReference type="HAMAP" id="MF_00158">
    <property type="entry name" value="PanC"/>
    <property type="match status" value="1"/>
</dbReference>
<dbReference type="InterPro" id="IPR004821">
    <property type="entry name" value="Cyt_trans-like"/>
</dbReference>
<dbReference type="InterPro" id="IPR003721">
    <property type="entry name" value="Pantoate_ligase"/>
</dbReference>
<dbReference type="InterPro" id="IPR042176">
    <property type="entry name" value="Pantoate_ligase_C"/>
</dbReference>
<dbReference type="InterPro" id="IPR014729">
    <property type="entry name" value="Rossmann-like_a/b/a_fold"/>
</dbReference>
<dbReference type="NCBIfam" id="TIGR00125">
    <property type="entry name" value="cyt_tran_rel"/>
    <property type="match status" value="1"/>
</dbReference>
<dbReference type="NCBIfam" id="TIGR00018">
    <property type="entry name" value="panC"/>
    <property type="match status" value="1"/>
</dbReference>
<dbReference type="PANTHER" id="PTHR21299">
    <property type="entry name" value="CYTIDYLATE KINASE/PANTOATE-BETA-ALANINE LIGASE"/>
    <property type="match status" value="1"/>
</dbReference>
<dbReference type="PANTHER" id="PTHR21299:SF1">
    <property type="entry name" value="PANTOATE--BETA-ALANINE LIGASE"/>
    <property type="match status" value="1"/>
</dbReference>
<dbReference type="Pfam" id="PF02569">
    <property type="entry name" value="Pantoate_ligase"/>
    <property type="match status" value="1"/>
</dbReference>
<dbReference type="SUPFAM" id="SSF52374">
    <property type="entry name" value="Nucleotidylyl transferase"/>
    <property type="match status" value="1"/>
</dbReference>
<reference key="1">
    <citation type="journal article" date="2004" name="Nucleic Acids Res.">
        <title>The genome sequence of Bacillus cereus ATCC 10987 reveals metabolic adaptations and a large plasmid related to Bacillus anthracis pXO1.</title>
        <authorList>
            <person name="Rasko D.A."/>
            <person name="Ravel J."/>
            <person name="Oekstad O.A."/>
            <person name="Helgason E."/>
            <person name="Cer R.Z."/>
            <person name="Jiang L."/>
            <person name="Shores K.A."/>
            <person name="Fouts D.E."/>
            <person name="Tourasse N.J."/>
            <person name="Angiuoli S.V."/>
            <person name="Kolonay J.F."/>
            <person name="Nelson W.C."/>
            <person name="Kolstoe A.-B."/>
            <person name="Fraser C.M."/>
            <person name="Read T.D."/>
        </authorList>
    </citation>
    <scope>NUCLEOTIDE SEQUENCE [LARGE SCALE GENOMIC DNA]</scope>
    <source>
        <strain>ATCC 10987 / NRS 248</strain>
    </source>
</reference>
<proteinExistence type="inferred from homology"/>